<sequence>MTTTSSDELPRQADDDSMKWDRIYIQKLDPEVIFTKQERIGRGSFGEVYKGIDNRTGRVVAIKIIDLEQAEDEIEDIQQEIQVLSQCDSQYVTKYFGSFLKGSKLWIIMEYLGGGSALDLTKSGKLDESHIAVILREILKGLEYLHSERKIHRDIKAANVLVSEHGDVKVADFGVAGQLTETVKKRITFVGSPFWMAPELIKQSSYDYKADIWSLGITAIELANGEPPHSDLHPMRVLFLIPKNPPPVLQGSQWSKPFKEFVEMCLNKDPENRPSASTLLKHQFIKRAKKNSILVDLIERAAEYRLRTGVSSDSDLDEDSDGGGGTSKWDYPTVRGPRVSADDDGTVRQRTDRPRAQVDRRSPSGSPGGTIVRGSPQVAAVAEQLRNSSVGSSGYGSGGNSASSQYATSSLPQSHTASSGGATTITLGSPNGSPTSSLARTQSMVSPSGQRSGSAQSWELERGNRPMSERVSSQVSPSKYNQHRTSSSNGVQGGSGGRREYINGSGSGLNGNSSNQNHSEYSDAVRQRGPGGSGGRLDYRESHVPTSSQENLNHGRMYGYGAPPPSREANNVPMPRVKGALDCSLLPAIEHLSRTRHATAALDQLRHVFRDVEDSCPGICNELIEELMQRIAVPQVSQSDLDAAIRRLTTPPS</sequence>
<dbReference type="EC" id="2.7.11.1" evidence="1"/>
<dbReference type="EMBL" id="BX284605">
    <property type="protein sequence ID" value="CCD72150.1"/>
    <property type="molecule type" value="Genomic_DNA"/>
</dbReference>
<dbReference type="EMBL" id="BX284605">
    <property type="protein sequence ID" value="CCD72151.2"/>
    <property type="molecule type" value="Genomic_DNA"/>
</dbReference>
<dbReference type="EMBL" id="BX284605">
    <property type="protein sequence ID" value="CCD72152.2"/>
    <property type="molecule type" value="Genomic_DNA"/>
</dbReference>
<dbReference type="EMBL" id="BX284605">
    <property type="protein sequence ID" value="CCD72153.1"/>
    <property type="molecule type" value="Genomic_DNA"/>
</dbReference>
<dbReference type="RefSeq" id="NP_001024141.1">
    <molecule id="H2L099-4"/>
    <property type="nucleotide sequence ID" value="NM_001028970.3"/>
</dbReference>
<dbReference type="RefSeq" id="NP_001379995.1">
    <molecule id="H2L099-1"/>
    <property type="nucleotide sequence ID" value="NM_001392572.1"/>
</dbReference>
<dbReference type="RefSeq" id="NP_505309.1">
    <property type="nucleotide sequence ID" value="NM_072908.3"/>
</dbReference>
<dbReference type="RefSeq" id="NP_505310.2">
    <molecule id="H2L099-2"/>
    <property type="nucleotide sequence ID" value="NM_072909.5"/>
</dbReference>
<dbReference type="RefSeq" id="NP_505311.3">
    <molecule id="H2L099-3"/>
    <property type="nucleotide sequence ID" value="NM_072910.5"/>
</dbReference>
<dbReference type="SMR" id="H2L099"/>
<dbReference type="FunCoup" id="H2L099">
    <property type="interactions" value="2496"/>
</dbReference>
<dbReference type="IntAct" id="H2L099">
    <property type="interactions" value="1"/>
</dbReference>
<dbReference type="STRING" id="6239.T19A5.2b.1"/>
<dbReference type="PaxDb" id="6239-T19A5.2b"/>
<dbReference type="PeptideAtlas" id="H2L099"/>
<dbReference type="EnsemblMetazoa" id="T19A5.2a.1">
    <molecule id="H2L099-1"/>
    <property type="protein sequence ID" value="T19A5.2a.1"/>
    <property type="gene ID" value="WBGene00001526"/>
</dbReference>
<dbReference type="EnsemblMetazoa" id="T19A5.2b.1">
    <molecule id="H2L099-2"/>
    <property type="protein sequence ID" value="T19A5.2b.1"/>
    <property type="gene ID" value="WBGene00001526"/>
</dbReference>
<dbReference type="EnsemblMetazoa" id="T19A5.2c.1">
    <molecule id="H2L099-3"/>
    <property type="protein sequence ID" value="T19A5.2c.1"/>
    <property type="gene ID" value="WBGene00001526"/>
</dbReference>
<dbReference type="EnsemblMetazoa" id="T19A5.2d.1">
    <molecule id="H2L099-4"/>
    <property type="protein sequence ID" value="T19A5.2d.1"/>
    <property type="gene ID" value="WBGene00001526"/>
</dbReference>
<dbReference type="GeneID" id="179274"/>
<dbReference type="KEGG" id="cel:CELE_T19A5.2"/>
<dbReference type="UCSC" id="T19A5.2a">
    <property type="organism name" value="c. elegans"/>
</dbReference>
<dbReference type="AGR" id="WB:WBGene00001526"/>
<dbReference type="CTD" id="179274"/>
<dbReference type="WormBase" id="T19A5.2a">
    <molecule id="H2L099-1"/>
    <property type="protein sequence ID" value="CE07510"/>
    <property type="gene ID" value="WBGene00001526"/>
    <property type="gene designation" value="gck-1"/>
</dbReference>
<dbReference type="WormBase" id="T19A5.2b">
    <molecule id="H2L099-2"/>
    <property type="protein sequence ID" value="CE48939"/>
    <property type="gene ID" value="WBGene00001526"/>
    <property type="gene designation" value="gck-1"/>
</dbReference>
<dbReference type="WormBase" id="T19A5.2c">
    <molecule id="H2L099-3"/>
    <property type="protein sequence ID" value="CE49076"/>
    <property type="gene ID" value="WBGene00001526"/>
    <property type="gene designation" value="gck-1"/>
</dbReference>
<dbReference type="WormBase" id="T19A5.2d">
    <molecule id="H2L099-4"/>
    <property type="protein sequence ID" value="CE37048"/>
    <property type="gene ID" value="WBGene00001526"/>
    <property type="gene designation" value="gck-1"/>
</dbReference>
<dbReference type="eggNOG" id="KOG0201">
    <property type="taxonomic scope" value="Eukaryota"/>
</dbReference>
<dbReference type="GeneTree" id="ENSGT00940000176215"/>
<dbReference type="InParanoid" id="H2L099"/>
<dbReference type="OrthoDB" id="8693905at2759"/>
<dbReference type="PhylomeDB" id="H2L099"/>
<dbReference type="SignaLink" id="H2L099"/>
<dbReference type="PRO" id="PR:H2L099"/>
<dbReference type="Proteomes" id="UP000001940">
    <property type="component" value="Chromosome V"/>
</dbReference>
<dbReference type="Bgee" id="WBGene00001526">
    <property type="expression patterns" value="Expressed in pharyngeal muscle cell (C elegans) and 4 other cell types or tissues"/>
</dbReference>
<dbReference type="ExpressionAtlas" id="H2L099">
    <property type="expression patterns" value="baseline and differential"/>
</dbReference>
<dbReference type="GO" id="GO:0005737">
    <property type="term" value="C:cytoplasm"/>
    <property type="evidence" value="ECO:0000314"/>
    <property type="project" value="UniProtKB"/>
</dbReference>
<dbReference type="GO" id="GO:0098592">
    <property type="term" value="C:cytoplasmic side of apical plasma membrane"/>
    <property type="evidence" value="ECO:0000314"/>
    <property type="project" value="UniProtKB"/>
</dbReference>
<dbReference type="GO" id="GO:0005524">
    <property type="term" value="F:ATP binding"/>
    <property type="evidence" value="ECO:0007669"/>
    <property type="project" value="UniProtKB-KW"/>
</dbReference>
<dbReference type="GO" id="GO:0046872">
    <property type="term" value="F:metal ion binding"/>
    <property type="evidence" value="ECO:0007669"/>
    <property type="project" value="UniProtKB-KW"/>
</dbReference>
<dbReference type="GO" id="GO:0051019">
    <property type="term" value="F:mitogen-activated protein kinase binding"/>
    <property type="evidence" value="ECO:0000353"/>
    <property type="project" value="WormBase"/>
</dbReference>
<dbReference type="GO" id="GO:0106310">
    <property type="term" value="F:protein serine kinase activity"/>
    <property type="evidence" value="ECO:0007669"/>
    <property type="project" value="RHEA"/>
</dbReference>
<dbReference type="GO" id="GO:0004674">
    <property type="term" value="F:protein serine/threonine kinase activity"/>
    <property type="evidence" value="ECO:0000315"/>
    <property type="project" value="UniProtKB"/>
</dbReference>
<dbReference type="GO" id="GO:0060562">
    <property type="term" value="P:epithelial tube morphogenesis"/>
    <property type="evidence" value="ECO:0000314"/>
    <property type="project" value="UniProtKB"/>
</dbReference>
<dbReference type="GO" id="GO:0035556">
    <property type="term" value="P:intracellular signal transduction"/>
    <property type="evidence" value="ECO:0000318"/>
    <property type="project" value="GO_Central"/>
</dbReference>
<dbReference type="GO" id="GO:0051321">
    <property type="term" value="P:meiotic cell cycle"/>
    <property type="evidence" value="ECO:0007669"/>
    <property type="project" value="UniProtKB-KW"/>
</dbReference>
<dbReference type="GO" id="GO:0043066">
    <property type="term" value="P:negative regulation of apoptotic process"/>
    <property type="evidence" value="ECO:0000315"/>
    <property type="project" value="WormBase"/>
</dbReference>
<dbReference type="GO" id="GO:0048477">
    <property type="term" value="P:oogenesis"/>
    <property type="evidence" value="ECO:0007669"/>
    <property type="project" value="UniProtKB-KW"/>
</dbReference>
<dbReference type="GO" id="GO:2001137">
    <property type="term" value="P:positive regulation of endocytic recycling"/>
    <property type="evidence" value="ECO:0000315"/>
    <property type="project" value="UniProtKB"/>
</dbReference>
<dbReference type="GO" id="GO:0043547">
    <property type="term" value="P:positive regulation of GTPase activity"/>
    <property type="evidence" value="ECO:0000315"/>
    <property type="project" value="UniProtKB"/>
</dbReference>
<dbReference type="GO" id="GO:1903358">
    <property type="term" value="P:regulation of Golgi organization"/>
    <property type="evidence" value="ECO:0000315"/>
    <property type="project" value="UniProtKB"/>
</dbReference>
<dbReference type="GO" id="GO:0060281">
    <property type="term" value="P:regulation of oocyte development"/>
    <property type="evidence" value="ECO:0000315"/>
    <property type="project" value="WormBase"/>
</dbReference>
<dbReference type="CDD" id="cd06609">
    <property type="entry name" value="STKc_MST3_like"/>
    <property type="match status" value="1"/>
</dbReference>
<dbReference type="FunFam" id="1.10.12.70:FF:000005">
    <property type="entry name" value="Germinal center kinase 1"/>
    <property type="match status" value="1"/>
</dbReference>
<dbReference type="FunFam" id="1.10.510.10:FF:001069">
    <property type="entry name" value="Germinal center kinase 1"/>
    <property type="match status" value="1"/>
</dbReference>
<dbReference type="FunFam" id="3.30.200.20:FF:000092">
    <property type="entry name" value="Serine/threonine-protein kinase 24"/>
    <property type="match status" value="1"/>
</dbReference>
<dbReference type="Gene3D" id="1.10.12.70">
    <property type="match status" value="1"/>
</dbReference>
<dbReference type="Gene3D" id="3.30.200.20">
    <property type="entry name" value="Phosphorylase Kinase, domain 1"/>
    <property type="match status" value="1"/>
</dbReference>
<dbReference type="Gene3D" id="1.10.510.10">
    <property type="entry name" value="Transferase(Phosphotransferase) domain 1"/>
    <property type="match status" value="1"/>
</dbReference>
<dbReference type="InterPro" id="IPR011009">
    <property type="entry name" value="Kinase-like_dom_sf"/>
</dbReference>
<dbReference type="InterPro" id="IPR046409">
    <property type="entry name" value="PDC10_dimerisation_sf"/>
</dbReference>
<dbReference type="InterPro" id="IPR048288">
    <property type="entry name" value="PDCD10_N"/>
</dbReference>
<dbReference type="InterPro" id="IPR000719">
    <property type="entry name" value="Prot_kinase_dom"/>
</dbReference>
<dbReference type="InterPro" id="IPR017441">
    <property type="entry name" value="Protein_kinase_ATP_BS"/>
</dbReference>
<dbReference type="InterPro" id="IPR050629">
    <property type="entry name" value="STE20/SPS1-PAK"/>
</dbReference>
<dbReference type="PANTHER" id="PTHR48012:SF10">
    <property type="entry name" value="FI20177P1"/>
    <property type="match status" value="1"/>
</dbReference>
<dbReference type="PANTHER" id="PTHR48012">
    <property type="entry name" value="STERILE20-LIKE KINASE, ISOFORM B-RELATED"/>
    <property type="match status" value="1"/>
</dbReference>
<dbReference type="Pfam" id="PF20929">
    <property type="entry name" value="PDCD10_N"/>
    <property type="match status" value="1"/>
</dbReference>
<dbReference type="Pfam" id="PF00069">
    <property type="entry name" value="Pkinase"/>
    <property type="match status" value="1"/>
</dbReference>
<dbReference type="SMART" id="SM00220">
    <property type="entry name" value="S_TKc"/>
    <property type="match status" value="1"/>
</dbReference>
<dbReference type="SUPFAM" id="SSF56112">
    <property type="entry name" value="Protein kinase-like (PK-like)"/>
    <property type="match status" value="1"/>
</dbReference>
<dbReference type="PROSITE" id="PS00107">
    <property type="entry name" value="PROTEIN_KINASE_ATP"/>
    <property type="match status" value="1"/>
</dbReference>
<dbReference type="PROSITE" id="PS50011">
    <property type="entry name" value="PROTEIN_KINASE_DOM"/>
    <property type="match status" value="1"/>
</dbReference>
<accession>H2L099</accession>
<accession>H2L0A0</accession>
<accession>H2L0A1</accession>
<accession>Q6ABW4</accession>
<keyword id="KW-0025">Alternative splicing</keyword>
<keyword id="KW-0067">ATP-binding</keyword>
<keyword id="KW-1003">Cell membrane</keyword>
<keyword id="KW-0963">Cytoplasm</keyword>
<keyword id="KW-0221">Differentiation</keyword>
<keyword id="KW-0418">Kinase</keyword>
<keyword id="KW-0460">Magnesium</keyword>
<keyword id="KW-0469">Meiosis</keyword>
<keyword id="KW-0472">Membrane</keyword>
<keyword id="KW-0479">Metal-binding</keyword>
<keyword id="KW-0547">Nucleotide-binding</keyword>
<keyword id="KW-0896">Oogenesis</keyword>
<keyword id="KW-1185">Reference proteome</keyword>
<keyword id="KW-0723">Serine/threonine-protein kinase</keyword>
<keyword id="KW-0808">Transferase</keyword>
<comment type="function">
    <text evidence="4 5">Serine/threonine-protein kinase which is required for normal oogenesis and suppression of germline cell apoptosis. Inhibits phosphorylation and thus probably activation of mpk-1 during pachytene stage (PubMed:19826475). Involved in excretory canal elongation during postembryonic development, probably acting downstream of ccm-3 (PubMed:25743393).</text>
</comment>
<comment type="catalytic activity">
    <reaction evidence="1">
        <text>L-seryl-[protein] + ATP = O-phospho-L-seryl-[protein] + ADP + H(+)</text>
        <dbReference type="Rhea" id="RHEA:17989"/>
        <dbReference type="Rhea" id="RHEA-COMP:9863"/>
        <dbReference type="Rhea" id="RHEA-COMP:11604"/>
        <dbReference type="ChEBI" id="CHEBI:15378"/>
        <dbReference type="ChEBI" id="CHEBI:29999"/>
        <dbReference type="ChEBI" id="CHEBI:30616"/>
        <dbReference type="ChEBI" id="CHEBI:83421"/>
        <dbReference type="ChEBI" id="CHEBI:456216"/>
        <dbReference type="EC" id="2.7.11.1"/>
    </reaction>
</comment>
<comment type="catalytic activity">
    <reaction evidence="1">
        <text>L-threonyl-[protein] + ATP = O-phospho-L-threonyl-[protein] + ADP + H(+)</text>
        <dbReference type="Rhea" id="RHEA:46608"/>
        <dbReference type="Rhea" id="RHEA-COMP:11060"/>
        <dbReference type="Rhea" id="RHEA-COMP:11605"/>
        <dbReference type="ChEBI" id="CHEBI:15378"/>
        <dbReference type="ChEBI" id="CHEBI:30013"/>
        <dbReference type="ChEBI" id="CHEBI:30616"/>
        <dbReference type="ChEBI" id="CHEBI:61977"/>
        <dbReference type="ChEBI" id="CHEBI:456216"/>
        <dbReference type="EC" id="2.7.11.1"/>
    </reaction>
</comment>
<comment type="cofactor">
    <cofactor evidence="1">
        <name>Mg(2+)</name>
        <dbReference type="ChEBI" id="CHEBI:18420"/>
    </cofactor>
</comment>
<comment type="subunit">
    <text evidence="4 5">Interacts (via N-terminus) with mpk-1 (isoform a) (PubMed:19826475). Interacts with ccm-3 (PubMed:25743393).</text>
</comment>
<comment type="subcellular location">
    <subcellularLocation>
        <location evidence="5">Cytoplasm</location>
    </subcellularLocation>
    <subcellularLocation>
        <location evidence="5">Apical cell membrane</location>
        <topology evidence="5">Peripheral membrane protein</topology>
    </subcellularLocation>
    <text evidence="5">Co-localizes with ccm-3 in the apical membrane of the excretory canals.</text>
</comment>
<comment type="alternative products">
    <event type="alternative splicing"/>
    <isoform>
        <id>H2L099-1</id>
        <name evidence="9">a</name>
        <sequence type="displayed"/>
    </isoform>
    <isoform>
        <id>H2L099-2</id>
        <name evidence="10">b</name>
        <sequence type="described" ref="VSP_057877"/>
    </isoform>
    <isoform>
        <id>H2L099-3</id>
        <name evidence="11">c</name>
        <sequence type="described" ref="VSP_057877 VSP_057879"/>
    </isoform>
    <isoform>
        <id>H2L099-4</id>
        <name evidence="12">d</name>
        <sequence type="described" ref="VSP_057878"/>
    </isoform>
</comment>
<comment type="disruption phenotype">
    <text evidence="4 5">RNAi-mediated knockdown causes sterility resulting from several defects in oogenesis. Proximal ends of the gonads are filled with small germ cells and have a decrease in the number of nuclei in all stages of oogenesis especially at the pachytene stage where there is 60 percent less nuclei. In addition, animals lack a discernible rachis which is a tube-like formation of anucleate cytoplasm between pachytene nuclei, no clear transition into progression from pachytene to diplotene stage and a failure to progress from diplotene into diakinesis. Increased germline cell apoptosis (PubMed:19826475). RNAi-mediated knockdown causes truncated excretory canals associated with the formation of cysts, a reduced distribution of Golgi and ER components along the excretory canals and a decrease in cdc-42 activation (PubMed:25743393).</text>
</comment>
<comment type="similarity">
    <text evidence="7">Belongs to the protein kinase superfamily. STE Ser/Thr protein kinase family. STE20 subfamily.</text>
</comment>
<feature type="chain" id="PRO_0000434013" description="Germinal center kinase 1" evidence="7">
    <location>
        <begin position="1"/>
        <end position="653"/>
    </location>
</feature>
<feature type="domain" description="Protein kinase" evidence="2">
    <location>
        <begin position="34"/>
        <end position="285"/>
    </location>
</feature>
<feature type="region of interest" description="Disordered" evidence="3">
    <location>
        <begin position="309"/>
        <end position="373"/>
    </location>
</feature>
<feature type="region of interest" description="Disordered" evidence="3">
    <location>
        <begin position="389"/>
        <end position="563"/>
    </location>
</feature>
<feature type="compositionally biased region" description="Basic and acidic residues" evidence="3">
    <location>
        <begin position="345"/>
        <end position="362"/>
    </location>
</feature>
<feature type="compositionally biased region" description="Polar residues" evidence="3">
    <location>
        <begin position="405"/>
        <end position="457"/>
    </location>
</feature>
<feature type="compositionally biased region" description="Basic and acidic residues" evidence="3">
    <location>
        <begin position="459"/>
        <end position="468"/>
    </location>
</feature>
<feature type="compositionally biased region" description="Polar residues" evidence="3">
    <location>
        <begin position="470"/>
        <end position="485"/>
    </location>
</feature>
<feature type="active site" description="Proton acceptor" evidence="2">
    <location>
        <position position="154"/>
    </location>
</feature>
<feature type="binding site" evidence="2">
    <location>
        <begin position="40"/>
        <end position="48"/>
    </location>
    <ligand>
        <name>ATP</name>
        <dbReference type="ChEBI" id="CHEBI:30616"/>
    </ligand>
</feature>
<feature type="binding site" evidence="2">
    <location>
        <position position="63"/>
    </location>
    <ligand>
        <name>ATP</name>
        <dbReference type="ChEBI" id="CHEBI:30616"/>
    </ligand>
</feature>
<feature type="splice variant" id="VSP_057877" description="In isoform b and isoform c." evidence="7">
    <original>MTTTSSDELPRQADDDSMKWDRIYIQ</original>
    <variation>MDDHRFTDTILRTTNVQSAIQRFEKRAPVSAPPYRESEPFREVLKDEPAPPFLQKQNSYDSPLFVNTNIVYPVEQNSYFPQITPPREHVTYGIMNDSKMDDSIDSATLNRFETGFKPSNFGKTIQGIYNSTEHPQQTPEVVLPSSLSVDLNVMSPEVSPPKPAERRKVVKPIEDNS</variation>
    <location>
        <begin position="1"/>
        <end position="26"/>
    </location>
</feature>
<feature type="splice variant" id="VSP_057878" description="In isoform d." evidence="7">
    <original>TTTSSDELPRQADDDSMKWDRIYIQ</original>
    <variation>DFTNFGSEIE</variation>
    <location>
        <begin position="2"/>
        <end position="26"/>
    </location>
</feature>
<feature type="splice variant" id="VSP_057879" description="In isoform c." evidence="7">
    <original>AANVLVSEHGDVKVADFGVAGQLTETVKKRITFVGSPFWMAPELIKQSSYDYK</original>
    <variation>GANVLLDRQTAAVKICDYGVAKPLDTVLKANTFVGTPFFMAPEVVKGEYSIE</variation>
    <location>
        <begin position="157"/>
        <end position="209"/>
    </location>
</feature>
<feature type="mutagenesis site" description="Severe loss of interaction with mpk-1 (isoform a)." evidence="4">
    <original>R</original>
    <variation>G</variation>
    <location>
        <position position="55"/>
    </location>
</feature>
<feature type="mutagenesis site" description="Probable loss of activity. Truncated excretory canals; when associated with A-188." evidence="5">
    <original>K</original>
    <variation>R</variation>
    <location>
        <position position="63"/>
    </location>
</feature>
<feature type="mutagenesis site" description="Loss of interaction with mpk-1 (isoform a)." evidence="4">
    <original>I</original>
    <variation>N</variation>
    <location>
        <position position="64"/>
    </location>
</feature>
<feature type="mutagenesis site" description="Probable loss of activity. Truncated excretory canals; when associated with R-63." evidence="5">
    <original>T</original>
    <variation>A</variation>
    <location>
        <position position="188"/>
    </location>
</feature>
<protein>
    <recommendedName>
        <fullName evidence="6">Germinal center kinase 1</fullName>
        <ecNumber evidence="1">2.7.11.1</ecNumber>
    </recommendedName>
</protein>
<gene>
    <name evidence="9" type="primary">gck-1</name>
    <name evidence="9" type="ORF">T19A5.2</name>
</gene>
<organism evidence="8">
    <name type="scientific">Caenorhabditis elegans</name>
    <dbReference type="NCBI Taxonomy" id="6239"/>
    <lineage>
        <taxon>Eukaryota</taxon>
        <taxon>Metazoa</taxon>
        <taxon>Ecdysozoa</taxon>
        <taxon>Nematoda</taxon>
        <taxon>Chromadorea</taxon>
        <taxon>Rhabditida</taxon>
        <taxon>Rhabditina</taxon>
        <taxon>Rhabditomorpha</taxon>
        <taxon>Rhabditoidea</taxon>
        <taxon>Rhabditidae</taxon>
        <taxon>Peloderinae</taxon>
        <taxon>Caenorhabditis</taxon>
    </lineage>
</organism>
<reference evidence="7" key="1">
    <citation type="journal article" date="2009" name="PLoS ONE">
        <title>The germinal center kinase GCK-1 is a negative regulator of MAP kinase activation and apoptosis in the C. elegans germline.</title>
        <authorList>
            <person name="Schouest K.R."/>
            <person name="Kurasawa Y."/>
            <person name="Furuta T."/>
            <person name="Hisamoto N."/>
            <person name="Matsumoto K."/>
            <person name="Schumacher J.M."/>
        </authorList>
    </citation>
    <scope>NUCLEOTIDE SEQUENCE [MRNA] (ISOFORM A)</scope>
    <scope>FUNCTION</scope>
    <scope>INTERACTION WITH MPK-1</scope>
    <scope>DISRUPTION PHENOTYPE</scope>
    <scope>MUTAGENESIS OF ARG-55 AND ILE-64</scope>
</reference>
<reference evidence="8" key="2">
    <citation type="journal article" date="1998" name="Science">
        <title>Genome sequence of the nematode C. elegans: a platform for investigating biology.</title>
        <authorList>
            <consortium name="The C. elegans sequencing consortium"/>
        </authorList>
    </citation>
    <scope>NUCLEOTIDE SEQUENCE [LARGE SCALE GENOMIC DNA]</scope>
    <source>
        <strain evidence="8">Bristol N2</strain>
    </source>
</reference>
<reference evidence="7" key="3">
    <citation type="journal article" date="2015" name="Nat. Commun.">
        <title>CCM-3/STRIPAK promotes seamless tube extension through endocytic recycling.</title>
        <authorList>
            <person name="Lant B."/>
            <person name="Yu B."/>
            <person name="Goudreault M."/>
            <person name="Holmyard D."/>
            <person name="Knight J.D."/>
            <person name="Xu P."/>
            <person name="Zhao L."/>
            <person name="Chin K."/>
            <person name="Wallace E."/>
            <person name="Zhen M."/>
            <person name="Gingras A.C."/>
            <person name="Derry W.B."/>
        </authorList>
    </citation>
    <scope>FUNCTION</scope>
    <scope>INTERACTION WITH CCM-3</scope>
    <scope>SUBCELLULAR LOCATION</scope>
    <scope>DISRUPTION PHENOTYPE</scope>
    <scope>MUTAGENESIS OF LYS-63 AND THR-188</scope>
</reference>
<name>GCK1_CAEEL</name>
<evidence type="ECO:0000250" key="1">
    <source>
        <dbReference type="UniProtKB" id="Q9P289"/>
    </source>
</evidence>
<evidence type="ECO:0000255" key="2">
    <source>
        <dbReference type="PROSITE-ProRule" id="PRU00159"/>
    </source>
</evidence>
<evidence type="ECO:0000256" key="3">
    <source>
        <dbReference type="SAM" id="MobiDB-lite"/>
    </source>
</evidence>
<evidence type="ECO:0000269" key="4">
    <source>
    </source>
</evidence>
<evidence type="ECO:0000269" key="5">
    <source>
    </source>
</evidence>
<evidence type="ECO:0000303" key="6">
    <source>
    </source>
</evidence>
<evidence type="ECO:0000305" key="7"/>
<evidence type="ECO:0000312" key="8">
    <source>
        <dbReference type="Proteomes" id="UP000001940"/>
    </source>
</evidence>
<evidence type="ECO:0000312" key="9">
    <source>
        <dbReference type="WormBase" id="T19A5.2a"/>
    </source>
</evidence>
<evidence type="ECO:0000312" key="10">
    <source>
        <dbReference type="WormBase" id="T19A5.2b"/>
    </source>
</evidence>
<evidence type="ECO:0000312" key="11">
    <source>
        <dbReference type="WormBase" id="T19A5.2c"/>
    </source>
</evidence>
<evidence type="ECO:0000312" key="12">
    <source>
        <dbReference type="WormBase" id="T19A5.2d"/>
    </source>
</evidence>
<proteinExistence type="evidence at protein level"/>